<evidence type="ECO:0000250" key="1"/>
<evidence type="ECO:0000255" key="2">
    <source>
        <dbReference type="PROSITE-ProRule" id="PRU00176"/>
    </source>
</evidence>
<evidence type="ECO:0000305" key="3"/>
<reference key="1">
    <citation type="journal article" date="2005" name="Genome Res.">
        <title>Comparative genome sequencing of Drosophila pseudoobscura: chromosomal, gene, and cis-element evolution.</title>
        <authorList>
            <person name="Richards S."/>
            <person name="Liu Y."/>
            <person name="Bettencourt B.R."/>
            <person name="Hradecky P."/>
            <person name="Letovsky S."/>
            <person name="Nielsen R."/>
            <person name="Thornton K."/>
            <person name="Hubisz M.J."/>
            <person name="Chen R."/>
            <person name="Meisel R.P."/>
            <person name="Couronne O."/>
            <person name="Hua S."/>
            <person name="Smith M.A."/>
            <person name="Zhang P."/>
            <person name="Liu J."/>
            <person name="Bussemaker H.J."/>
            <person name="van Batenburg M.F."/>
            <person name="Howells S.L."/>
            <person name="Scherer S.E."/>
            <person name="Sodergren E."/>
            <person name="Matthews B.B."/>
            <person name="Crosby M.A."/>
            <person name="Schroeder A.J."/>
            <person name="Ortiz-Barrientos D."/>
            <person name="Rives C.M."/>
            <person name="Metzker M.L."/>
            <person name="Muzny D.M."/>
            <person name="Scott G."/>
            <person name="Steffen D."/>
            <person name="Wheeler D.A."/>
            <person name="Worley K.C."/>
            <person name="Havlak P."/>
            <person name="Durbin K.J."/>
            <person name="Egan A."/>
            <person name="Gill R."/>
            <person name="Hume J."/>
            <person name="Morgan M.B."/>
            <person name="Miner G."/>
            <person name="Hamilton C."/>
            <person name="Huang Y."/>
            <person name="Waldron L."/>
            <person name="Verduzco D."/>
            <person name="Clerc-Blankenburg K.P."/>
            <person name="Dubchak I."/>
            <person name="Noor M.A.F."/>
            <person name="Anderson W."/>
            <person name="White K.P."/>
            <person name="Clark A.G."/>
            <person name="Schaeffer S.W."/>
            <person name="Gelbart W.M."/>
            <person name="Weinstock G.M."/>
            <person name="Gibbs R.A."/>
        </authorList>
    </citation>
    <scope>NUCLEOTIDE SEQUENCE [LARGE SCALE GENOMIC DNA]</scope>
    <source>
        <strain>MV2-25 / Tucson 14011-0121.94</strain>
    </source>
</reference>
<proteinExistence type="inferred from homology"/>
<dbReference type="EMBL" id="CM000070">
    <property type="protein sequence ID" value="EAL29108.1"/>
    <property type="molecule type" value="Genomic_DNA"/>
</dbReference>
<dbReference type="RefSeq" id="XP_001359956.1">
    <property type="nucleotide sequence ID" value="XM_001359919.3"/>
</dbReference>
<dbReference type="SMR" id="Q293V6"/>
<dbReference type="FunCoup" id="Q293V6">
    <property type="interactions" value="2250"/>
</dbReference>
<dbReference type="STRING" id="46245.Q293V6"/>
<dbReference type="EnsemblMetazoa" id="FBtr0286452">
    <property type="protein sequence ID" value="FBpp0284890"/>
    <property type="gene ID" value="FBgn0071628"/>
</dbReference>
<dbReference type="GeneID" id="4803172"/>
<dbReference type="KEGG" id="dpo:4803172"/>
<dbReference type="CTD" id="42166"/>
<dbReference type="eggNOG" id="KOG0121">
    <property type="taxonomic scope" value="Eukaryota"/>
</dbReference>
<dbReference type="HOGENOM" id="CLU_070952_2_0_1"/>
<dbReference type="InParanoid" id="Q293V6"/>
<dbReference type="OMA" id="DIRRIIM"/>
<dbReference type="PhylomeDB" id="Q293V6"/>
<dbReference type="Proteomes" id="UP000001819">
    <property type="component" value="Chromosome 2"/>
</dbReference>
<dbReference type="Bgee" id="FBgn0071628">
    <property type="expression patterns" value="Expressed in male reproductive system and 2 other cell types or tissues"/>
</dbReference>
<dbReference type="GO" id="GO:0005846">
    <property type="term" value="C:nuclear cap binding complex"/>
    <property type="evidence" value="ECO:0007669"/>
    <property type="project" value="InterPro"/>
</dbReference>
<dbReference type="GO" id="GO:0005634">
    <property type="term" value="C:nucleus"/>
    <property type="evidence" value="ECO:0007669"/>
    <property type="project" value="UniProtKB-SubCell"/>
</dbReference>
<dbReference type="GO" id="GO:0000339">
    <property type="term" value="F:RNA cap binding"/>
    <property type="evidence" value="ECO:0007669"/>
    <property type="project" value="InterPro"/>
</dbReference>
<dbReference type="GO" id="GO:0045292">
    <property type="term" value="P:mRNA cis splicing, via spliceosome"/>
    <property type="evidence" value="ECO:0007669"/>
    <property type="project" value="InterPro"/>
</dbReference>
<dbReference type="GO" id="GO:0031047">
    <property type="term" value="P:regulatory ncRNA-mediated gene silencing"/>
    <property type="evidence" value="ECO:0007669"/>
    <property type="project" value="UniProtKB-KW"/>
</dbReference>
<dbReference type="CDD" id="cd12240">
    <property type="entry name" value="RRM_NCBP2"/>
    <property type="match status" value="1"/>
</dbReference>
<dbReference type="FunFam" id="3.30.70.330:FF:000128">
    <property type="entry name" value="Nuclear cap-binding protein subunit 2"/>
    <property type="match status" value="1"/>
</dbReference>
<dbReference type="Gene3D" id="3.30.70.330">
    <property type="match status" value="1"/>
</dbReference>
<dbReference type="InterPro" id="IPR027157">
    <property type="entry name" value="NCBP2"/>
</dbReference>
<dbReference type="InterPro" id="IPR034148">
    <property type="entry name" value="NCBP2_RRM"/>
</dbReference>
<dbReference type="InterPro" id="IPR012677">
    <property type="entry name" value="Nucleotide-bd_a/b_plait_sf"/>
</dbReference>
<dbReference type="InterPro" id="IPR035979">
    <property type="entry name" value="RBD_domain_sf"/>
</dbReference>
<dbReference type="InterPro" id="IPR000504">
    <property type="entry name" value="RRM_dom"/>
</dbReference>
<dbReference type="PANTHER" id="PTHR18847">
    <property type="entry name" value="20 KD NUCLEAR CAP BINDING PROTEIN"/>
    <property type="match status" value="1"/>
</dbReference>
<dbReference type="PANTHER" id="PTHR18847:SF0">
    <property type="entry name" value="NUCLEAR CAP-BINDING PROTEIN SUBUNIT 2"/>
    <property type="match status" value="1"/>
</dbReference>
<dbReference type="Pfam" id="PF00076">
    <property type="entry name" value="RRM_1"/>
    <property type="match status" value="1"/>
</dbReference>
<dbReference type="SMART" id="SM00360">
    <property type="entry name" value="RRM"/>
    <property type="match status" value="1"/>
</dbReference>
<dbReference type="SUPFAM" id="SSF54928">
    <property type="entry name" value="RNA-binding domain, RBD"/>
    <property type="match status" value="1"/>
</dbReference>
<dbReference type="PROSITE" id="PS50102">
    <property type="entry name" value="RRM"/>
    <property type="match status" value="1"/>
</dbReference>
<feature type="chain" id="PRO_0000385269" description="Nuclear cap-binding protein subunit 2">
    <location>
        <begin position="1"/>
        <end position="154"/>
    </location>
</feature>
<feature type="domain" description="RRM" evidence="2">
    <location>
        <begin position="30"/>
        <end position="108"/>
    </location>
</feature>
<feature type="binding site" evidence="1">
    <location>
        <position position="10"/>
    </location>
    <ligand>
        <name>mRNA</name>
        <dbReference type="ChEBI" id="CHEBI:33699"/>
    </ligand>
    <ligandPart>
        <name>mRNA cap</name>
    </ligandPart>
</feature>
<feature type="binding site" evidence="1">
    <location>
        <position position="33"/>
    </location>
    <ligand>
        <name>mRNA</name>
        <dbReference type="ChEBI" id="CHEBI:33699"/>
    </ligand>
    <ligandPart>
        <name>mRNA cap</name>
    </ligandPart>
</feature>
<feature type="binding site" evidence="1">
    <location>
        <begin position="102"/>
        <end position="106"/>
    </location>
    <ligand>
        <name>mRNA</name>
        <dbReference type="ChEBI" id="CHEBI:33699"/>
    </ligand>
    <ligandPart>
        <name>mRNA cap</name>
    </ligandPart>
</feature>
<feature type="binding site" evidence="1">
    <location>
        <begin position="113"/>
        <end position="117"/>
    </location>
    <ligand>
        <name>mRNA</name>
        <dbReference type="ChEBI" id="CHEBI:33699"/>
    </ligand>
    <ligandPart>
        <name>mRNA cap</name>
    </ligandPart>
</feature>
<feature type="binding site" evidence="1">
    <location>
        <begin position="123"/>
        <end position="124"/>
    </location>
    <ligand>
        <name>mRNA</name>
        <dbReference type="ChEBI" id="CHEBI:33699"/>
    </ligand>
    <ligandPart>
        <name>mRNA cap</name>
    </ligandPart>
</feature>
<keyword id="KW-0507">mRNA processing</keyword>
<keyword id="KW-0508">mRNA splicing</keyword>
<keyword id="KW-0539">Nucleus</keyword>
<keyword id="KW-1185">Reference proteome</keyword>
<keyword id="KW-0694">RNA-binding</keyword>
<keyword id="KW-0943">RNA-mediated gene silencing</keyword>
<gene>
    <name type="primary">Cbp20</name>
    <name type="ORF">GA11577</name>
</gene>
<protein>
    <recommendedName>
        <fullName>Nuclear cap-binding protein subunit 2</fullName>
    </recommendedName>
    <alternativeName>
        <fullName>20 kDa nuclear cap-binding protein</fullName>
    </alternativeName>
    <alternativeName>
        <fullName>NCBP 20 kDa subunit</fullName>
        <shortName>CBP20</shortName>
    </alternativeName>
</protein>
<organism>
    <name type="scientific">Drosophila pseudoobscura pseudoobscura</name>
    <name type="common">Fruit fly</name>
    <dbReference type="NCBI Taxonomy" id="46245"/>
    <lineage>
        <taxon>Eukaryota</taxon>
        <taxon>Metazoa</taxon>
        <taxon>Ecdysozoa</taxon>
        <taxon>Arthropoda</taxon>
        <taxon>Hexapoda</taxon>
        <taxon>Insecta</taxon>
        <taxon>Pterygota</taxon>
        <taxon>Neoptera</taxon>
        <taxon>Endopterygota</taxon>
        <taxon>Diptera</taxon>
        <taxon>Brachycera</taxon>
        <taxon>Muscomorpha</taxon>
        <taxon>Ephydroidea</taxon>
        <taxon>Drosophilidae</taxon>
        <taxon>Drosophila</taxon>
        <taxon>Sophophora</taxon>
    </lineage>
</organism>
<sequence>MATSVELSSYRDQHFKGSRSEQERSLKDSCTLYVGNLSFYTTEEQIHELFSRCGDVRLIVMGLDKYKKTPCGFCFVEYYIRSEAESAMRFVNGTRLDDRLIRVDWDAGFIEGRQYGRGKTGGQVRDEYRTDYDAGRGGYGKLLSLKIAPNTDNR</sequence>
<comment type="function">
    <text evidence="1">Component of the cap-binding complex (CBC), which binds co-transcriptionally to the 5' cap of pre-mRNAs and is involved in various processes such as pre-mRNA splicing and RNA-mediated gene silencing (RNAi). The CBC complex is involved in miRNA-mediated RNA interference via its interaction with Ars2 and is required for primary microRNAs (miRNAs) processing. Also involved in innate immunity via the short interfering RNAs (siRNAs) processing machinery by restricting the viral RNA production. In the CBC complex, Cbp20 recognizes and binds capped RNAs (m7GpppG-capped RNA) but requires Cbp80 to stabilize the movement of its N-terminal loop and lock the CBC into a high affinity cap-binding state with the cap structure (By similarity).</text>
</comment>
<comment type="subunit">
    <text evidence="1">Component of the nuclear cap-binding complex (CBC), a heterodimer composed of Cbp80 and Cbp20 that interacts with m7GpppG-capped RNA. Interacts with Ars2 (By similarity).</text>
</comment>
<comment type="subcellular location">
    <subcellularLocation>
        <location evidence="1">Nucleus</location>
    </subcellularLocation>
</comment>
<comment type="similarity">
    <text evidence="3">Belongs to the RRM NCBP2 family.</text>
</comment>
<accession>Q293V6</accession>
<name>NCBP2_DROPS</name>